<proteinExistence type="evidence at protein level"/>
<dbReference type="EC" id="2.3.1.46" evidence="2 3"/>
<dbReference type="EMBL" id="AE004091">
    <property type="protein sequence ID" value="AAG03779.1"/>
    <property type="molecule type" value="Genomic_DNA"/>
</dbReference>
<dbReference type="PIR" id="E83597">
    <property type="entry name" value="E83597"/>
</dbReference>
<dbReference type="SMR" id="P57714"/>
<dbReference type="STRING" id="208964.PA0390"/>
<dbReference type="ESTHER" id="pseae-metx">
    <property type="family name" value="Homoserine_transacetylase"/>
</dbReference>
<dbReference type="PaxDb" id="208964-PA0390"/>
<dbReference type="DNASU" id="878549"/>
<dbReference type="KEGG" id="pae:PA0390"/>
<dbReference type="PATRIC" id="fig|208964.12.peg.410"/>
<dbReference type="PseudoCAP" id="PA0390"/>
<dbReference type="HOGENOM" id="CLU_028760_1_2_6"/>
<dbReference type="InParanoid" id="P57714"/>
<dbReference type="OrthoDB" id="9800754at2"/>
<dbReference type="PhylomeDB" id="P57714"/>
<dbReference type="BioCyc" id="PAER208964:G1FZ6-394-MONOMER"/>
<dbReference type="UniPathway" id="UPA00051">
    <property type="reaction ID" value="UER00075"/>
</dbReference>
<dbReference type="Proteomes" id="UP000002438">
    <property type="component" value="Chromosome"/>
</dbReference>
<dbReference type="GO" id="GO:0005737">
    <property type="term" value="C:cytoplasm"/>
    <property type="evidence" value="ECO:0007669"/>
    <property type="project" value="UniProtKB-SubCell"/>
</dbReference>
<dbReference type="GO" id="GO:0004414">
    <property type="term" value="F:homoserine O-acetyltransferase activity"/>
    <property type="evidence" value="ECO:0000318"/>
    <property type="project" value="GO_Central"/>
</dbReference>
<dbReference type="GO" id="GO:0008899">
    <property type="term" value="F:homoserine O-succinyltransferase activity"/>
    <property type="evidence" value="ECO:0007669"/>
    <property type="project" value="UniProtKB-UniRule"/>
</dbReference>
<dbReference type="GO" id="GO:0009086">
    <property type="term" value="P:methionine biosynthetic process"/>
    <property type="evidence" value="ECO:0000318"/>
    <property type="project" value="GO_Central"/>
</dbReference>
<dbReference type="FunFam" id="1.10.1740.110:FF:000001">
    <property type="entry name" value="Homoserine O-acetyltransferase"/>
    <property type="match status" value="1"/>
</dbReference>
<dbReference type="Gene3D" id="1.10.1740.110">
    <property type="match status" value="1"/>
</dbReference>
<dbReference type="Gene3D" id="3.40.50.1820">
    <property type="entry name" value="alpha/beta hydrolase"/>
    <property type="match status" value="1"/>
</dbReference>
<dbReference type="HAMAP" id="MF_00296">
    <property type="entry name" value="MetX_acyltransf"/>
    <property type="match status" value="1"/>
</dbReference>
<dbReference type="InterPro" id="IPR000073">
    <property type="entry name" value="AB_hydrolase_1"/>
</dbReference>
<dbReference type="InterPro" id="IPR029058">
    <property type="entry name" value="AB_hydrolase_fold"/>
</dbReference>
<dbReference type="InterPro" id="IPR008220">
    <property type="entry name" value="HAT_MetX-like"/>
</dbReference>
<dbReference type="NCBIfam" id="TIGR01392">
    <property type="entry name" value="homoserO_Ac_trn"/>
    <property type="match status" value="1"/>
</dbReference>
<dbReference type="NCBIfam" id="NF001209">
    <property type="entry name" value="PRK00175.1"/>
    <property type="match status" value="1"/>
</dbReference>
<dbReference type="PANTHER" id="PTHR32268">
    <property type="entry name" value="HOMOSERINE O-ACETYLTRANSFERASE"/>
    <property type="match status" value="1"/>
</dbReference>
<dbReference type="PANTHER" id="PTHR32268:SF11">
    <property type="entry name" value="HOMOSERINE O-ACETYLTRANSFERASE"/>
    <property type="match status" value="1"/>
</dbReference>
<dbReference type="Pfam" id="PF00561">
    <property type="entry name" value="Abhydrolase_1"/>
    <property type="match status" value="1"/>
</dbReference>
<dbReference type="PIRSF" id="PIRSF000443">
    <property type="entry name" value="Homoser_Ac_trans"/>
    <property type="match status" value="1"/>
</dbReference>
<dbReference type="SUPFAM" id="SSF53474">
    <property type="entry name" value="alpha/beta-Hydrolases"/>
    <property type="match status" value="1"/>
</dbReference>
<name>METXS_PSEAE</name>
<comment type="function">
    <text evidence="2 3 8">Transfers a succinyl group from succinyl-CoA to L-homoserine, forming succinyl-L-homoserine.</text>
</comment>
<comment type="catalytic activity">
    <reaction evidence="2 3">
        <text>L-homoserine + succinyl-CoA = O-succinyl-L-homoserine + CoA</text>
        <dbReference type="Rhea" id="RHEA:22008"/>
        <dbReference type="ChEBI" id="CHEBI:57287"/>
        <dbReference type="ChEBI" id="CHEBI:57292"/>
        <dbReference type="ChEBI" id="CHEBI:57476"/>
        <dbReference type="ChEBI" id="CHEBI:57661"/>
        <dbReference type="EC" id="2.3.1.46"/>
    </reaction>
</comment>
<comment type="activity regulation">
    <text evidence="3">Requires MetW for activity.</text>
</comment>
<comment type="pathway">
    <text evidence="1 2 8">Amino-acid biosynthesis; L-methionine biosynthesis via de novo pathway; O-succinyl-L-homoserine from L-homoserine: step 1/1.</text>
</comment>
<comment type="subunit">
    <text evidence="2">Homodimer.</text>
</comment>
<comment type="subcellular location">
    <subcellularLocation>
        <location evidence="2">Cytoplasm</location>
    </subcellularLocation>
</comment>
<comment type="disruption phenotype">
    <text evidence="4">Methionine auxotroph. Defect is complemented by expression of the E.coli metA gene.</text>
</comment>
<comment type="similarity">
    <text evidence="2">Belongs to the AB hydrolase superfamily. MetX family.</text>
</comment>
<reference key="1">
    <citation type="journal article" date="2000" name="Nature">
        <title>Complete genome sequence of Pseudomonas aeruginosa PAO1, an opportunistic pathogen.</title>
        <authorList>
            <person name="Stover C.K."/>
            <person name="Pham X.-Q.T."/>
            <person name="Erwin A.L."/>
            <person name="Mizoguchi S.D."/>
            <person name="Warrener P."/>
            <person name="Hickey M.J."/>
            <person name="Brinkman F.S.L."/>
            <person name="Hufnagle W.O."/>
            <person name="Kowalik D.J."/>
            <person name="Lagrou M."/>
            <person name="Garber R.L."/>
            <person name="Goltry L."/>
            <person name="Tolentino E."/>
            <person name="Westbrock-Wadman S."/>
            <person name="Yuan Y."/>
            <person name="Brody L.L."/>
            <person name="Coulter S.N."/>
            <person name="Folger K.R."/>
            <person name="Kas A."/>
            <person name="Larbig K."/>
            <person name="Lim R.M."/>
            <person name="Smith K.A."/>
            <person name="Spencer D.H."/>
            <person name="Wong G.K.-S."/>
            <person name="Wu Z."/>
            <person name="Paulsen I.T."/>
            <person name="Reizer J."/>
            <person name="Saier M.H. Jr."/>
            <person name="Hancock R.E.W."/>
            <person name="Lory S."/>
            <person name="Olson M.V."/>
        </authorList>
    </citation>
    <scope>NUCLEOTIDE SEQUENCE [LARGE SCALE GENOMIC DNA]</scope>
    <source>
        <strain>ATCC 15692 / DSM 22644 / CIP 104116 / JCM 14847 / LMG 12228 / 1C / PRS 101 / PAO1</strain>
    </source>
</reference>
<reference key="2">
    <citation type="journal article" date="1995" name="Microbiology">
        <title>A direct sulfhydrylation pathway is used for methionine biosynthesis in Pseudomonas aeruginosa.</title>
        <authorList>
            <person name="Foglino M."/>
            <person name="Borne F."/>
            <person name="Bally M."/>
            <person name="Ball G."/>
            <person name="Patte J.-C."/>
        </authorList>
    </citation>
    <scope>PROBABLE FUNCTION AS A SUCCINYLTRANSFERASE</scope>
    <scope>PATHWAY</scope>
    <scope>DISRUPTION PHENOTYPE</scope>
    <source>
        <strain>ATCC 15692 / DSM 22644 / CIP 104116 / JCM 14847 / LMG 12228 / 1C / PRS 101 / PAO1</strain>
    </source>
</reference>
<reference key="3">
    <citation type="journal article" date="2017" name="Nat. Chem. Biol.">
        <title>Parallel evolution of non-homologous isofunctional enzymes in methionine biosynthesis.</title>
        <authorList>
            <person name="Bastard K."/>
            <person name="Perret A."/>
            <person name="Mariage A."/>
            <person name="Bessonnet T."/>
            <person name="Pinet-Turpault A."/>
            <person name="Petit J.L."/>
            <person name="Darii E."/>
            <person name="Bazire P."/>
            <person name="Vergne-Vaxelaire C."/>
            <person name="Brewee C."/>
            <person name="Debard A."/>
            <person name="Pellouin V."/>
            <person name="Besnard-Gonnet M."/>
            <person name="Artiguenave F."/>
            <person name="Medigue C."/>
            <person name="Vallenet D."/>
            <person name="Danchin A."/>
            <person name="Zaparucha A."/>
            <person name="Weissenbach J."/>
            <person name="Salanoubat M."/>
            <person name="de Berardinis V."/>
        </authorList>
    </citation>
    <scope>FUNCTION</scope>
    <scope>CATALYTIC ACTIVITY</scope>
    <scope>ACTIVITY REGULATION</scope>
</reference>
<accession>P57714</accession>
<accession>Q9I6A5</accession>
<sequence>MPTVFPDDSVGLVSPQTLHFNEPLELTSGKSLAEYDLVIETYGELNATQSNAVLICHALSGHHHAAGYHSVDERKPGWWDSCIGPGKPIDTRKFFVVALNNLGGCNGSSGPASINPATGKVYGADFPMVTVEDWVHSQARLADRLGIRQWAAVVGGSLGGMQALQWTISYPERVRHCLCIASAPKLSAQNIAFNEVARQAILSDPEFLGGYFQEQGVIPKRGLKLARMVGHITYLSDDAMGAKFGRVLKTEKLNYDLHSVEFQVESYLRYQGEEFSTRFDANTYLLMTKALDYFDPAAAHGDDLVRTLEGVEADFCLMSFTTDWRFSPARSREIVDALIAAKKNVSYLEIDAPQGHDAFLMPIPRYLQAFSGYMNRISV</sequence>
<feature type="chain" id="PRO_0000155737" description="Homoserine O-succinyltransferase">
    <location>
        <begin position="1"/>
        <end position="379"/>
    </location>
</feature>
<feature type="domain" description="AB hydrolase-1" evidence="2">
    <location>
        <begin position="51"/>
        <end position="360"/>
    </location>
</feature>
<feature type="active site" description="Nucleophile" evidence="2">
    <location>
        <position position="157"/>
    </location>
</feature>
<feature type="active site" evidence="2">
    <location>
        <position position="323"/>
    </location>
</feature>
<feature type="active site" evidence="2">
    <location>
        <position position="356"/>
    </location>
</feature>
<feature type="binding site" evidence="2">
    <location>
        <position position="227"/>
    </location>
    <ligand>
        <name>substrate</name>
    </ligand>
</feature>
<feature type="binding site" evidence="2">
    <location>
        <position position="357"/>
    </location>
    <ligand>
        <name>substrate</name>
    </ligand>
</feature>
<feature type="site" description="Important for acyl-CoA specificity" evidence="2 7">
    <location>
        <position position="325"/>
    </location>
</feature>
<organism>
    <name type="scientific">Pseudomonas aeruginosa (strain ATCC 15692 / DSM 22644 / CIP 104116 / JCM 14847 / LMG 12228 / 1C / PRS 101 / PAO1)</name>
    <dbReference type="NCBI Taxonomy" id="208964"/>
    <lineage>
        <taxon>Bacteria</taxon>
        <taxon>Pseudomonadati</taxon>
        <taxon>Pseudomonadota</taxon>
        <taxon>Gammaproteobacteria</taxon>
        <taxon>Pseudomonadales</taxon>
        <taxon>Pseudomonadaceae</taxon>
        <taxon>Pseudomonas</taxon>
    </lineage>
</organism>
<protein>
    <recommendedName>
        <fullName evidence="2 6">Homoserine O-succinyltransferase</fullName>
        <shortName evidence="2 5">HST</shortName>
        <ecNumber evidence="2 3">2.3.1.46</ecNumber>
    </recommendedName>
    <alternativeName>
        <fullName evidence="2 6">Homoserine transsuccinylase</fullName>
        <shortName evidence="2 6">HTS</shortName>
    </alternativeName>
</protein>
<keyword id="KW-0012">Acyltransferase</keyword>
<keyword id="KW-0028">Amino-acid biosynthesis</keyword>
<keyword id="KW-0963">Cytoplasm</keyword>
<keyword id="KW-0486">Methionine biosynthesis</keyword>
<keyword id="KW-1185">Reference proteome</keyword>
<keyword id="KW-0808">Transferase</keyword>
<evidence type="ECO:0000250" key="1">
    <source>
        <dbReference type="UniProtKB" id="P07623"/>
    </source>
</evidence>
<evidence type="ECO:0000255" key="2">
    <source>
        <dbReference type="HAMAP-Rule" id="MF_00296"/>
    </source>
</evidence>
<evidence type="ECO:0000269" key="3">
    <source>
    </source>
</evidence>
<evidence type="ECO:0000269" key="4">
    <source>
    </source>
</evidence>
<evidence type="ECO:0000303" key="5">
    <source>
    </source>
</evidence>
<evidence type="ECO:0000305" key="6"/>
<evidence type="ECO:0000305" key="7">
    <source>
    </source>
</evidence>
<evidence type="ECO:0000305" key="8">
    <source>
    </source>
</evidence>
<gene>
    <name evidence="2 5" type="primary">metXS</name>
    <name type="ordered locus">PA0390</name>
</gene>